<feature type="chain" id="PRO_0000317316" description="Protein sym1">
    <location>
        <begin position="1"/>
        <end position="206"/>
    </location>
</feature>
<feature type="transmembrane region" description="Helical" evidence="1">
    <location>
        <begin position="107"/>
        <end position="127"/>
    </location>
</feature>
<feature type="transmembrane region" description="Helical" evidence="1">
    <location>
        <begin position="169"/>
        <end position="189"/>
    </location>
</feature>
<sequence length="206" mass="23410">MFSRFATRYNALFEKAPIMTMCLTAGTLGGISDAVAQGLTIYQTNKNAMIGLDGVRLNTHPEIPSIKRVLQFVTFGFAISPFQFRWLRLLSAKFPIEKGAINVVKRVLLDQAVFAPFGTAFFFSWMTLAEGKGFRGAYDKLQAVFWPTLKANYMVWPFFQTVNFWLMPLQYQMPFACTVAIFWNIFLSLKNASSMQESGSQEIELF</sequence>
<comment type="subcellular location">
    <subcellularLocation>
        <location evidence="2">Mitochondrion inner membrane</location>
        <topology evidence="2">Multi-pass membrane protein</topology>
    </subcellularLocation>
</comment>
<comment type="similarity">
    <text evidence="3">Belongs to the peroxisomal membrane protein PXMP2/4 family.</text>
</comment>
<name>SYM1_SCHPO</name>
<evidence type="ECO:0000255" key="1"/>
<evidence type="ECO:0000269" key="2">
    <source>
    </source>
</evidence>
<evidence type="ECO:0000305" key="3"/>
<reference key="1">
    <citation type="journal article" date="2002" name="Nature">
        <title>The genome sequence of Schizosaccharomyces pombe.</title>
        <authorList>
            <person name="Wood V."/>
            <person name="Gwilliam R."/>
            <person name="Rajandream M.A."/>
            <person name="Lyne M.H."/>
            <person name="Lyne R."/>
            <person name="Stewart A."/>
            <person name="Sgouros J.G."/>
            <person name="Peat N."/>
            <person name="Hayles J."/>
            <person name="Baker S.G."/>
            <person name="Basham D."/>
            <person name="Bowman S."/>
            <person name="Brooks K."/>
            <person name="Brown D."/>
            <person name="Brown S."/>
            <person name="Chillingworth T."/>
            <person name="Churcher C.M."/>
            <person name="Collins M."/>
            <person name="Connor R."/>
            <person name="Cronin A."/>
            <person name="Davis P."/>
            <person name="Feltwell T."/>
            <person name="Fraser A."/>
            <person name="Gentles S."/>
            <person name="Goble A."/>
            <person name="Hamlin N."/>
            <person name="Harris D.E."/>
            <person name="Hidalgo J."/>
            <person name="Hodgson G."/>
            <person name="Holroyd S."/>
            <person name="Hornsby T."/>
            <person name="Howarth S."/>
            <person name="Huckle E.J."/>
            <person name="Hunt S."/>
            <person name="Jagels K."/>
            <person name="James K.D."/>
            <person name="Jones L."/>
            <person name="Jones M."/>
            <person name="Leather S."/>
            <person name="McDonald S."/>
            <person name="McLean J."/>
            <person name="Mooney P."/>
            <person name="Moule S."/>
            <person name="Mungall K.L."/>
            <person name="Murphy L.D."/>
            <person name="Niblett D."/>
            <person name="Odell C."/>
            <person name="Oliver K."/>
            <person name="O'Neil S."/>
            <person name="Pearson D."/>
            <person name="Quail M.A."/>
            <person name="Rabbinowitsch E."/>
            <person name="Rutherford K.M."/>
            <person name="Rutter S."/>
            <person name="Saunders D."/>
            <person name="Seeger K."/>
            <person name="Sharp S."/>
            <person name="Skelton J."/>
            <person name="Simmonds M.N."/>
            <person name="Squares R."/>
            <person name="Squares S."/>
            <person name="Stevens K."/>
            <person name="Taylor K."/>
            <person name="Taylor R.G."/>
            <person name="Tivey A."/>
            <person name="Walsh S.V."/>
            <person name="Warren T."/>
            <person name="Whitehead S."/>
            <person name="Woodward J.R."/>
            <person name="Volckaert G."/>
            <person name="Aert R."/>
            <person name="Robben J."/>
            <person name="Grymonprez B."/>
            <person name="Weltjens I."/>
            <person name="Vanstreels E."/>
            <person name="Rieger M."/>
            <person name="Schaefer M."/>
            <person name="Mueller-Auer S."/>
            <person name="Gabel C."/>
            <person name="Fuchs M."/>
            <person name="Duesterhoeft A."/>
            <person name="Fritzc C."/>
            <person name="Holzer E."/>
            <person name="Moestl D."/>
            <person name="Hilbert H."/>
            <person name="Borzym K."/>
            <person name="Langer I."/>
            <person name="Beck A."/>
            <person name="Lehrach H."/>
            <person name="Reinhardt R."/>
            <person name="Pohl T.M."/>
            <person name="Eger P."/>
            <person name="Zimmermann W."/>
            <person name="Wedler H."/>
            <person name="Wambutt R."/>
            <person name="Purnelle B."/>
            <person name="Goffeau A."/>
            <person name="Cadieu E."/>
            <person name="Dreano S."/>
            <person name="Gloux S."/>
            <person name="Lelaure V."/>
            <person name="Mottier S."/>
            <person name="Galibert F."/>
            <person name="Aves S.J."/>
            <person name="Xiang Z."/>
            <person name="Hunt C."/>
            <person name="Moore K."/>
            <person name="Hurst S.M."/>
            <person name="Lucas M."/>
            <person name="Rochet M."/>
            <person name="Gaillardin C."/>
            <person name="Tallada V.A."/>
            <person name="Garzon A."/>
            <person name="Thode G."/>
            <person name="Daga R.R."/>
            <person name="Cruzado L."/>
            <person name="Jimenez J."/>
            <person name="Sanchez M."/>
            <person name="del Rey F."/>
            <person name="Benito J."/>
            <person name="Dominguez A."/>
            <person name="Revuelta J.L."/>
            <person name="Moreno S."/>
            <person name="Armstrong J."/>
            <person name="Forsburg S.L."/>
            <person name="Cerutti L."/>
            <person name="Lowe T."/>
            <person name="McCombie W.R."/>
            <person name="Paulsen I."/>
            <person name="Potashkin J."/>
            <person name="Shpakovski G.V."/>
            <person name="Ussery D."/>
            <person name="Barrell B.G."/>
            <person name="Nurse P."/>
        </authorList>
    </citation>
    <scope>NUCLEOTIDE SEQUENCE [LARGE SCALE GENOMIC DNA]</scope>
    <source>
        <strain>972 / ATCC 24843</strain>
    </source>
</reference>
<reference key="2">
    <citation type="journal article" date="2006" name="Nat. Biotechnol.">
        <title>ORFeome cloning and global analysis of protein localization in the fission yeast Schizosaccharomyces pombe.</title>
        <authorList>
            <person name="Matsuyama A."/>
            <person name="Arai R."/>
            <person name="Yashiroda Y."/>
            <person name="Shirai A."/>
            <person name="Kamata A."/>
            <person name="Sekido S."/>
            <person name="Kobayashi Y."/>
            <person name="Hashimoto A."/>
            <person name="Hamamoto M."/>
            <person name="Hiraoka Y."/>
            <person name="Horinouchi S."/>
            <person name="Yoshida M."/>
        </authorList>
    </citation>
    <scope>SUBCELLULAR LOCATION [LARGE SCALE ANALYSIS]</scope>
</reference>
<proteinExistence type="inferred from homology"/>
<protein>
    <recommendedName>
        <fullName>Protein sym1</fullName>
    </recommendedName>
</protein>
<dbReference type="EMBL" id="CU329670">
    <property type="protein sequence ID" value="CAB16281.1"/>
    <property type="molecule type" value="Genomic_DNA"/>
</dbReference>
<dbReference type="PIR" id="T38724">
    <property type="entry name" value="T38724"/>
</dbReference>
<dbReference type="RefSeq" id="NP_594971.1">
    <property type="nucleotide sequence ID" value="NM_001020402.2"/>
</dbReference>
<dbReference type="BioGRID" id="279623">
    <property type="interactions" value="2"/>
</dbReference>
<dbReference type="FunCoup" id="O14142">
    <property type="interactions" value="447"/>
</dbReference>
<dbReference type="STRING" id="284812.O14142"/>
<dbReference type="iPTMnet" id="O14142"/>
<dbReference type="PaxDb" id="4896-SPAC3G6.05.1"/>
<dbReference type="EnsemblFungi" id="SPAC3G6.05.1">
    <property type="protein sequence ID" value="SPAC3G6.05.1:pep"/>
    <property type="gene ID" value="SPAC3G6.05"/>
</dbReference>
<dbReference type="KEGG" id="spo:2543194"/>
<dbReference type="PomBase" id="SPAC3G6.05"/>
<dbReference type="VEuPathDB" id="FungiDB:SPAC3G6.05"/>
<dbReference type="eggNOG" id="KOG1944">
    <property type="taxonomic scope" value="Eukaryota"/>
</dbReference>
<dbReference type="HOGENOM" id="CLU_049109_8_0_1"/>
<dbReference type="InParanoid" id="O14142"/>
<dbReference type="OMA" id="FRVMPIQ"/>
<dbReference type="PhylomeDB" id="O14142"/>
<dbReference type="Reactome" id="R-SPO-9033241">
    <property type="pathway name" value="Peroxisomal protein import"/>
</dbReference>
<dbReference type="PRO" id="PR:O14142"/>
<dbReference type="Proteomes" id="UP000002485">
    <property type="component" value="Chromosome I"/>
</dbReference>
<dbReference type="GO" id="GO:0005737">
    <property type="term" value="C:cytoplasm"/>
    <property type="evidence" value="ECO:0000318"/>
    <property type="project" value="GO_Central"/>
</dbReference>
<dbReference type="GO" id="GO:0005743">
    <property type="term" value="C:mitochondrial inner membrane"/>
    <property type="evidence" value="ECO:0007669"/>
    <property type="project" value="UniProtKB-SubCell"/>
</dbReference>
<dbReference type="GO" id="GO:0005739">
    <property type="term" value="C:mitochondrion"/>
    <property type="evidence" value="ECO:0007005"/>
    <property type="project" value="PomBase"/>
</dbReference>
<dbReference type="GO" id="GO:0015267">
    <property type="term" value="F:channel activity"/>
    <property type="evidence" value="ECO:0000304"/>
    <property type="project" value="PomBase"/>
</dbReference>
<dbReference type="GO" id="GO:1990542">
    <property type="term" value="P:mitochondrial transmembrane transport"/>
    <property type="evidence" value="ECO:0000304"/>
    <property type="project" value="PomBase"/>
</dbReference>
<dbReference type="InterPro" id="IPR007248">
    <property type="entry name" value="Mpv17_PMP22"/>
</dbReference>
<dbReference type="PANTHER" id="PTHR11266">
    <property type="entry name" value="PEROXISOMAL MEMBRANE PROTEIN 2, PXMP2 MPV17"/>
    <property type="match status" value="1"/>
</dbReference>
<dbReference type="PANTHER" id="PTHR11266:SF119">
    <property type="entry name" value="PROTEIN SYM1"/>
    <property type="match status" value="1"/>
</dbReference>
<dbReference type="Pfam" id="PF04117">
    <property type="entry name" value="Mpv17_PMP22"/>
    <property type="match status" value="1"/>
</dbReference>
<organism>
    <name type="scientific">Schizosaccharomyces pombe (strain 972 / ATCC 24843)</name>
    <name type="common">Fission yeast</name>
    <dbReference type="NCBI Taxonomy" id="284812"/>
    <lineage>
        <taxon>Eukaryota</taxon>
        <taxon>Fungi</taxon>
        <taxon>Dikarya</taxon>
        <taxon>Ascomycota</taxon>
        <taxon>Taphrinomycotina</taxon>
        <taxon>Schizosaccharomycetes</taxon>
        <taxon>Schizosaccharomycetales</taxon>
        <taxon>Schizosaccharomycetaceae</taxon>
        <taxon>Schizosaccharomyces</taxon>
    </lineage>
</organism>
<accession>O14142</accession>
<keyword id="KW-0472">Membrane</keyword>
<keyword id="KW-0496">Mitochondrion</keyword>
<keyword id="KW-0999">Mitochondrion inner membrane</keyword>
<keyword id="KW-1185">Reference proteome</keyword>
<keyword id="KW-0812">Transmembrane</keyword>
<keyword id="KW-1133">Transmembrane helix</keyword>
<gene>
    <name type="primary">sym1</name>
    <name type="ORF">SPAC3G6.05</name>
</gene>